<gene>
    <name evidence="1" type="primary">hisB</name>
    <name type="ordered locus">PMN2A_1647</name>
</gene>
<proteinExistence type="inferred from homology"/>
<evidence type="ECO:0000255" key="1">
    <source>
        <dbReference type="HAMAP-Rule" id="MF_00076"/>
    </source>
</evidence>
<evidence type="ECO:0000256" key="2">
    <source>
        <dbReference type="SAM" id="MobiDB-lite"/>
    </source>
</evidence>
<feature type="chain" id="PRO_1000010327" description="Imidazoleglycerol-phosphate dehydratase">
    <location>
        <begin position="1"/>
        <end position="203"/>
    </location>
</feature>
<feature type="region of interest" description="Disordered" evidence="2">
    <location>
        <begin position="184"/>
        <end position="203"/>
    </location>
</feature>
<comment type="catalytic activity">
    <reaction evidence="1">
        <text>D-erythro-1-(imidazol-4-yl)glycerol 3-phosphate = 3-(imidazol-4-yl)-2-oxopropyl phosphate + H2O</text>
        <dbReference type="Rhea" id="RHEA:11040"/>
        <dbReference type="ChEBI" id="CHEBI:15377"/>
        <dbReference type="ChEBI" id="CHEBI:57766"/>
        <dbReference type="ChEBI" id="CHEBI:58278"/>
        <dbReference type="EC" id="4.2.1.19"/>
    </reaction>
</comment>
<comment type="pathway">
    <text evidence="1">Amino-acid biosynthesis; L-histidine biosynthesis; L-histidine from 5-phospho-alpha-D-ribose 1-diphosphate: step 6/9.</text>
</comment>
<comment type="subcellular location">
    <subcellularLocation>
        <location evidence="1">Cytoplasm</location>
    </subcellularLocation>
</comment>
<comment type="similarity">
    <text evidence="1">Belongs to the imidazoleglycerol-phosphate dehydratase family.</text>
</comment>
<name>HIS7_PROMT</name>
<protein>
    <recommendedName>
        <fullName evidence="1">Imidazoleglycerol-phosphate dehydratase</fullName>
        <shortName evidence="1">IGPD</shortName>
        <ecNumber evidence="1">4.2.1.19</ecNumber>
    </recommendedName>
</protein>
<organism>
    <name type="scientific">Prochlorococcus marinus (strain NATL2A)</name>
    <dbReference type="NCBI Taxonomy" id="59920"/>
    <lineage>
        <taxon>Bacteria</taxon>
        <taxon>Bacillati</taxon>
        <taxon>Cyanobacteriota</taxon>
        <taxon>Cyanophyceae</taxon>
        <taxon>Synechococcales</taxon>
        <taxon>Prochlorococcaceae</taxon>
        <taxon>Prochlorococcus</taxon>
    </lineage>
</organism>
<accession>Q46H93</accession>
<reference key="1">
    <citation type="journal article" date="2007" name="PLoS Genet.">
        <title>Patterns and implications of gene gain and loss in the evolution of Prochlorococcus.</title>
        <authorList>
            <person name="Kettler G.C."/>
            <person name="Martiny A.C."/>
            <person name="Huang K."/>
            <person name="Zucker J."/>
            <person name="Coleman M.L."/>
            <person name="Rodrigue S."/>
            <person name="Chen F."/>
            <person name="Lapidus A."/>
            <person name="Ferriera S."/>
            <person name="Johnson J."/>
            <person name="Steglich C."/>
            <person name="Church G.M."/>
            <person name="Richardson P."/>
            <person name="Chisholm S.W."/>
        </authorList>
    </citation>
    <scope>NUCLEOTIDE SEQUENCE [LARGE SCALE GENOMIC DNA]</scope>
    <source>
        <strain>NATL2A</strain>
    </source>
</reference>
<sequence length="203" mass="22187">MEKTREGEIRRETKETDVFVKIDLDGSGKCSANTGIGFLDHMIQQLSSHGLFDIEVRANGDTHIDDHHTNEDVGIAIGQALSKALGDRVGIKRFGHFLAPLDEALIQVVVDCSGRPHLSFSLDIPSQKVGTYDTELVKEFFGAVVSNGGLTLHIRQLAGNNTHHIIEATFKSFARALRMATEIDPRRSSQIPSSKGVLEQAGQ</sequence>
<keyword id="KW-0028">Amino-acid biosynthesis</keyword>
<keyword id="KW-0963">Cytoplasm</keyword>
<keyword id="KW-0368">Histidine biosynthesis</keyword>
<keyword id="KW-0456">Lyase</keyword>
<keyword id="KW-1185">Reference proteome</keyword>
<dbReference type="EC" id="4.2.1.19" evidence="1"/>
<dbReference type="EMBL" id="CP000095">
    <property type="protein sequence ID" value="AAZ59135.1"/>
    <property type="molecule type" value="Genomic_DNA"/>
</dbReference>
<dbReference type="RefSeq" id="WP_011294280.1">
    <property type="nucleotide sequence ID" value="NC_007335.2"/>
</dbReference>
<dbReference type="SMR" id="Q46H93"/>
<dbReference type="STRING" id="59920.PMN2A_1647"/>
<dbReference type="KEGG" id="pmn:PMN2A_1647"/>
<dbReference type="HOGENOM" id="CLU_044308_3_0_3"/>
<dbReference type="OrthoDB" id="9790411at2"/>
<dbReference type="PhylomeDB" id="Q46H93"/>
<dbReference type="UniPathway" id="UPA00031">
    <property type="reaction ID" value="UER00011"/>
</dbReference>
<dbReference type="Proteomes" id="UP000002535">
    <property type="component" value="Chromosome"/>
</dbReference>
<dbReference type="GO" id="GO:0005737">
    <property type="term" value="C:cytoplasm"/>
    <property type="evidence" value="ECO:0007669"/>
    <property type="project" value="UniProtKB-SubCell"/>
</dbReference>
<dbReference type="GO" id="GO:0004424">
    <property type="term" value="F:imidazoleglycerol-phosphate dehydratase activity"/>
    <property type="evidence" value="ECO:0007669"/>
    <property type="project" value="UniProtKB-UniRule"/>
</dbReference>
<dbReference type="GO" id="GO:0000105">
    <property type="term" value="P:L-histidine biosynthetic process"/>
    <property type="evidence" value="ECO:0007669"/>
    <property type="project" value="UniProtKB-UniRule"/>
</dbReference>
<dbReference type="CDD" id="cd07914">
    <property type="entry name" value="IGPD"/>
    <property type="match status" value="1"/>
</dbReference>
<dbReference type="FunFam" id="3.30.230.40:FF:000002">
    <property type="entry name" value="Imidazoleglycerol-phosphate dehydratase"/>
    <property type="match status" value="1"/>
</dbReference>
<dbReference type="FunFam" id="3.30.230.40:FF:000003">
    <property type="entry name" value="Imidazoleglycerol-phosphate dehydratase HisB"/>
    <property type="match status" value="1"/>
</dbReference>
<dbReference type="Gene3D" id="3.30.230.40">
    <property type="entry name" value="Imidazole glycerol phosphate dehydratase, domain 1"/>
    <property type="match status" value="2"/>
</dbReference>
<dbReference type="HAMAP" id="MF_00076">
    <property type="entry name" value="HisB"/>
    <property type="match status" value="1"/>
</dbReference>
<dbReference type="InterPro" id="IPR038494">
    <property type="entry name" value="IGPD_sf"/>
</dbReference>
<dbReference type="InterPro" id="IPR000807">
    <property type="entry name" value="ImidazoleglycerolP_deHydtase"/>
</dbReference>
<dbReference type="InterPro" id="IPR020565">
    <property type="entry name" value="ImidazoleglycerP_deHydtase_CS"/>
</dbReference>
<dbReference type="InterPro" id="IPR020568">
    <property type="entry name" value="Ribosomal_Su5_D2-typ_SF"/>
</dbReference>
<dbReference type="NCBIfam" id="NF002108">
    <property type="entry name" value="PRK00951.1-3"/>
    <property type="match status" value="1"/>
</dbReference>
<dbReference type="NCBIfam" id="NF002109">
    <property type="entry name" value="PRK00951.1-5"/>
    <property type="match status" value="1"/>
</dbReference>
<dbReference type="NCBIfam" id="NF002111">
    <property type="entry name" value="PRK00951.2-1"/>
    <property type="match status" value="1"/>
</dbReference>
<dbReference type="NCBIfam" id="NF002114">
    <property type="entry name" value="PRK00951.2-4"/>
    <property type="match status" value="1"/>
</dbReference>
<dbReference type="PANTHER" id="PTHR23133:SF2">
    <property type="entry name" value="IMIDAZOLEGLYCEROL-PHOSPHATE DEHYDRATASE"/>
    <property type="match status" value="1"/>
</dbReference>
<dbReference type="PANTHER" id="PTHR23133">
    <property type="entry name" value="IMIDAZOLEGLYCEROL-PHOSPHATE DEHYDRATASE HIS7"/>
    <property type="match status" value="1"/>
</dbReference>
<dbReference type="Pfam" id="PF00475">
    <property type="entry name" value="IGPD"/>
    <property type="match status" value="1"/>
</dbReference>
<dbReference type="SUPFAM" id="SSF54211">
    <property type="entry name" value="Ribosomal protein S5 domain 2-like"/>
    <property type="match status" value="2"/>
</dbReference>
<dbReference type="PROSITE" id="PS00954">
    <property type="entry name" value="IGP_DEHYDRATASE_1"/>
    <property type="match status" value="1"/>
</dbReference>
<dbReference type="PROSITE" id="PS00955">
    <property type="entry name" value="IGP_DEHYDRATASE_2"/>
    <property type="match status" value="1"/>
</dbReference>